<reference key="1">
    <citation type="journal article" date="2001" name="Nature">
        <title>Genome sequence of enterohaemorrhagic Escherichia coli O157:H7.</title>
        <authorList>
            <person name="Perna N.T."/>
            <person name="Plunkett G. III"/>
            <person name="Burland V."/>
            <person name="Mau B."/>
            <person name="Glasner J.D."/>
            <person name="Rose D.J."/>
            <person name="Mayhew G.F."/>
            <person name="Evans P.S."/>
            <person name="Gregor J."/>
            <person name="Kirkpatrick H.A."/>
            <person name="Posfai G."/>
            <person name="Hackett J."/>
            <person name="Klink S."/>
            <person name="Boutin A."/>
            <person name="Shao Y."/>
            <person name="Miller L."/>
            <person name="Grotbeck E.J."/>
            <person name="Davis N.W."/>
            <person name="Lim A."/>
            <person name="Dimalanta E.T."/>
            <person name="Potamousis K."/>
            <person name="Apodaca J."/>
            <person name="Anantharaman T.S."/>
            <person name="Lin J."/>
            <person name="Yen G."/>
            <person name="Schwartz D.C."/>
            <person name="Welch R.A."/>
            <person name="Blattner F.R."/>
        </authorList>
    </citation>
    <scope>NUCLEOTIDE SEQUENCE [LARGE SCALE GENOMIC DNA]</scope>
    <source>
        <strain>O157:H7 / EDL933 / ATCC 700927 / EHEC</strain>
    </source>
</reference>
<reference key="2">
    <citation type="journal article" date="2001" name="DNA Res.">
        <title>Complete genome sequence of enterohemorrhagic Escherichia coli O157:H7 and genomic comparison with a laboratory strain K-12.</title>
        <authorList>
            <person name="Hayashi T."/>
            <person name="Makino K."/>
            <person name="Ohnishi M."/>
            <person name="Kurokawa K."/>
            <person name="Ishii K."/>
            <person name="Yokoyama K."/>
            <person name="Han C.-G."/>
            <person name="Ohtsubo E."/>
            <person name="Nakayama K."/>
            <person name="Murata T."/>
            <person name="Tanaka M."/>
            <person name="Tobe T."/>
            <person name="Iida T."/>
            <person name="Takami H."/>
            <person name="Honda T."/>
            <person name="Sasakawa C."/>
            <person name="Ogasawara N."/>
            <person name="Yasunaga T."/>
            <person name="Kuhara S."/>
            <person name="Shiba T."/>
            <person name="Hattori M."/>
            <person name="Shinagawa H."/>
        </authorList>
    </citation>
    <scope>NUCLEOTIDE SEQUENCE [LARGE SCALE GENOMIC DNA]</scope>
    <source>
        <strain>O157:H7 / Sakai / RIMD 0509952 / EHEC</strain>
    </source>
</reference>
<gene>
    <name type="primary">wza</name>
    <name type="ordered locus">Z3227</name>
    <name type="ordered locus">ECs2867</name>
</gene>
<organism>
    <name type="scientific">Escherichia coli O157:H7</name>
    <dbReference type="NCBI Taxonomy" id="83334"/>
    <lineage>
        <taxon>Bacteria</taxon>
        <taxon>Pseudomonadati</taxon>
        <taxon>Pseudomonadota</taxon>
        <taxon>Gammaproteobacteria</taxon>
        <taxon>Enterobacterales</taxon>
        <taxon>Enterobacteriaceae</taxon>
        <taxon>Escherichia</taxon>
    </lineage>
</organism>
<proteinExistence type="inferred from homology"/>
<accession>P0A931</accession>
<accession>P71235</accession>
<accession>P71273</accession>
<accession>P76388</accession>
<evidence type="ECO:0000250" key="1"/>
<evidence type="ECO:0000255" key="2">
    <source>
        <dbReference type="PROSITE-ProRule" id="PRU00303"/>
    </source>
</evidence>
<evidence type="ECO:0000305" key="3"/>
<dbReference type="EMBL" id="AE005174">
    <property type="protein sequence ID" value="AAG57122.1"/>
    <property type="molecule type" value="Genomic_DNA"/>
</dbReference>
<dbReference type="EMBL" id="BA000007">
    <property type="protein sequence ID" value="BAB36290.1"/>
    <property type="molecule type" value="Genomic_DNA"/>
</dbReference>
<dbReference type="PIR" id="C90987">
    <property type="entry name" value="C90987"/>
</dbReference>
<dbReference type="PIR" id="F85832">
    <property type="entry name" value="F85832"/>
</dbReference>
<dbReference type="RefSeq" id="NP_310894.1">
    <property type="nucleotide sequence ID" value="NC_002695.1"/>
</dbReference>
<dbReference type="RefSeq" id="WP_000978094.1">
    <property type="nucleotide sequence ID" value="NZ_VOAI01000013.1"/>
</dbReference>
<dbReference type="SMR" id="P0A931"/>
<dbReference type="STRING" id="155864.Z3227"/>
<dbReference type="GeneID" id="913884"/>
<dbReference type="GeneID" id="93775129"/>
<dbReference type="KEGG" id="ece:Z3227"/>
<dbReference type="KEGG" id="ecs:ECs_2867"/>
<dbReference type="PATRIC" id="fig|386585.9.peg.3000"/>
<dbReference type="eggNOG" id="COG1596">
    <property type="taxonomic scope" value="Bacteria"/>
</dbReference>
<dbReference type="HOGENOM" id="CLU_038343_4_2_6"/>
<dbReference type="OMA" id="GCTIIPG"/>
<dbReference type="UniPathway" id="UPA00631"/>
<dbReference type="Proteomes" id="UP000000558">
    <property type="component" value="Chromosome"/>
</dbReference>
<dbReference type="Proteomes" id="UP000002519">
    <property type="component" value="Chromosome"/>
</dbReference>
<dbReference type="GO" id="GO:0009279">
    <property type="term" value="C:cell outer membrane"/>
    <property type="evidence" value="ECO:0007669"/>
    <property type="project" value="UniProtKB-SubCell"/>
</dbReference>
<dbReference type="GO" id="GO:0046930">
    <property type="term" value="C:pore complex"/>
    <property type="evidence" value="ECO:0007669"/>
    <property type="project" value="UniProtKB-KW"/>
</dbReference>
<dbReference type="GO" id="GO:0015159">
    <property type="term" value="F:polysaccharide transmembrane transporter activity"/>
    <property type="evidence" value="ECO:0007669"/>
    <property type="project" value="InterPro"/>
</dbReference>
<dbReference type="GO" id="GO:0015288">
    <property type="term" value="F:porin activity"/>
    <property type="evidence" value="ECO:0007669"/>
    <property type="project" value="UniProtKB-KW"/>
</dbReference>
<dbReference type="GO" id="GO:0006811">
    <property type="term" value="P:monoatomic ion transport"/>
    <property type="evidence" value="ECO:0007669"/>
    <property type="project" value="UniProtKB-KW"/>
</dbReference>
<dbReference type="GO" id="GO:0000271">
    <property type="term" value="P:polysaccharide biosynthetic process"/>
    <property type="evidence" value="ECO:0007669"/>
    <property type="project" value="UniProtKB-KW"/>
</dbReference>
<dbReference type="Gene3D" id="1.20.5.70">
    <property type="match status" value="1"/>
</dbReference>
<dbReference type="Gene3D" id="3.10.560.10">
    <property type="entry name" value="Outer membrane lipoprotein wza domain like"/>
    <property type="match status" value="2"/>
</dbReference>
<dbReference type="Gene3D" id="3.30.1950.10">
    <property type="entry name" value="wza like domain"/>
    <property type="match status" value="1"/>
</dbReference>
<dbReference type="InterPro" id="IPR049712">
    <property type="entry name" value="Poly_export"/>
</dbReference>
<dbReference type="InterPro" id="IPR003715">
    <property type="entry name" value="Poly_export_N"/>
</dbReference>
<dbReference type="InterPro" id="IPR054765">
    <property type="entry name" value="SLBB_dom"/>
</dbReference>
<dbReference type="InterPro" id="IPR040716">
    <property type="entry name" value="Wza_C"/>
</dbReference>
<dbReference type="NCBIfam" id="NF011658">
    <property type="entry name" value="PRK15078.1"/>
    <property type="match status" value="1"/>
</dbReference>
<dbReference type="PANTHER" id="PTHR33619">
    <property type="entry name" value="POLYSACCHARIDE EXPORT PROTEIN GFCE-RELATED"/>
    <property type="match status" value="1"/>
</dbReference>
<dbReference type="PANTHER" id="PTHR33619:SF3">
    <property type="entry name" value="POLYSACCHARIDE EXPORT PROTEIN GFCE-RELATED"/>
    <property type="match status" value="1"/>
</dbReference>
<dbReference type="Pfam" id="PF02563">
    <property type="entry name" value="Poly_export"/>
    <property type="match status" value="1"/>
</dbReference>
<dbReference type="Pfam" id="PF22461">
    <property type="entry name" value="SLBB_2"/>
    <property type="match status" value="2"/>
</dbReference>
<dbReference type="Pfam" id="PF18412">
    <property type="entry name" value="Wza_C"/>
    <property type="match status" value="1"/>
</dbReference>
<dbReference type="PROSITE" id="PS51257">
    <property type="entry name" value="PROKAR_LIPOPROTEIN"/>
    <property type="match status" value="1"/>
</dbReference>
<keyword id="KW-0998">Cell outer membrane</keyword>
<keyword id="KW-0270">Exopolysaccharide synthesis</keyword>
<keyword id="KW-0406">Ion transport</keyword>
<keyword id="KW-0449">Lipoprotein</keyword>
<keyword id="KW-0472">Membrane</keyword>
<keyword id="KW-0564">Palmitate</keyword>
<keyword id="KW-0625">Polysaccharide transport</keyword>
<keyword id="KW-0626">Porin</keyword>
<keyword id="KW-1185">Reference proteome</keyword>
<keyword id="KW-0732">Signal</keyword>
<keyword id="KW-0762">Sugar transport</keyword>
<keyword id="KW-0812">Transmembrane</keyword>
<keyword id="KW-1134">Transmembrane beta strand</keyword>
<keyword id="KW-0813">Transport</keyword>
<name>WZA_ECO57</name>
<comment type="function">
    <text evidence="1">Probably involved in the export of the extracellular polysaccharide colanic acid from the cell to medium.</text>
</comment>
<comment type="pathway">
    <text>Glycan metabolism; exopolysaccharide biosynthesis.</text>
</comment>
<comment type="subcellular location">
    <subcellularLocation>
        <location evidence="1">Cell outer membrane</location>
        <topology evidence="1">Multi-pass membrane protein</topology>
    </subcellularLocation>
</comment>
<comment type="similarity">
    <text evidence="3">Belongs to the BexD/CtrA/VexA family.</text>
</comment>
<protein>
    <recommendedName>
        <fullName>Putative polysaccharide export protein wza</fullName>
    </recommendedName>
</protein>
<sequence length="379" mass="41910">MMKSKMKLMPLLVSVTLISGCTVLPGSNMSTMGKDVIKQQDADFDLDKMVNVYPLTPRLIDQLRPRPNVARPNMTLESEIANYQYRVGPGDVLNVTVWDHPELTTPAGQYRSSSDTGNWVQPDGTMFYPYIGKVHVVGKTLAEIRSDITGRLATYIADPQVDVNIAAFRSQKAYISGQVNKSGQQAITNVPLTILDAINAAGGLTDTADWRNVVLTHNGREERISLQALMQNGDLNQNRLLYPGDILYVPRNDDLKVFVMGEVKKQSTLKMDFSGMTLTEALGNAEGIDMTTSNASGIFVIRPLKGEGGRNGKIANIYQLDMSDATSLVMATEFRLQPYDVVYVTTAPVSRWNRLINQLLPTISGVRYMTDTASDIHNW</sequence>
<feature type="signal peptide" evidence="2">
    <location>
        <begin position="1"/>
        <end position="20"/>
    </location>
</feature>
<feature type="chain" id="PRO_0000025223" description="Putative polysaccharide export protein wza">
    <location>
        <begin position="21"/>
        <end position="379"/>
    </location>
</feature>
<feature type="lipid moiety-binding region" description="N-palmitoyl cysteine" evidence="2">
    <location>
        <position position="21"/>
    </location>
</feature>
<feature type="lipid moiety-binding region" description="S-diacylglycerol cysteine" evidence="2">
    <location>
        <position position="21"/>
    </location>
</feature>